<organism>
    <name type="scientific">Aspergillus niger</name>
    <dbReference type="NCBI Taxonomy" id="5061"/>
    <lineage>
        <taxon>Eukaryota</taxon>
        <taxon>Fungi</taxon>
        <taxon>Dikarya</taxon>
        <taxon>Ascomycota</taxon>
        <taxon>Pezizomycotina</taxon>
        <taxon>Eurotiomycetes</taxon>
        <taxon>Eurotiomycetidae</taxon>
        <taxon>Eurotiales</taxon>
        <taxon>Aspergillaceae</taxon>
        <taxon>Aspergillus</taxon>
        <taxon>Aspergillus subgen. Circumdati</taxon>
    </lineage>
</organism>
<evidence type="ECO:0000250" key="1"/>
<evidence type="ECO:0000250" key="2">
    <source>
        <dbReference type="UniProtKB" id="P20424"/>
    </source>
</evidence>
<evidence type="ECO:0000250" key="3">
    <source>
        <dbReference type="UniProtKB" id="P61011"/>
    </source>
</evidence>
<evidence type="ECO:0000305" key="4"/>
<proteinExistence type="inferred from homology"/>
<dbReference type="EC" id="3.6.5.4" evidence="3"/>
<dbReference type="EMBL" id="L38317">
    <property type="protein sequence ID" value="AAB04946.1"/>
    <property type="molecule type" value="Genomic_DNA"/>
</dbReference>
<dbReference type="PIR" id="JC4572">
    <property type="entry name" value="JC4572"/>
</dbReference>
<dbReference type="RefSeq" id="XP_059601461.1">
    <property type="nucleotide sequence ID" value="XM_059749887.1"/>
</dbReference>
<dbReference type="SMR" id="Q00179"/>
<dbReference type="PaxDb" id="5061-CADANGAP00008025"/>
<dbReference type="EnsemblFungi" id="CAK40424">
    <property type="protein sequence ID" value="CAK40424"/>
    <property type="gene ID" value="An09g06320"/>
</dbReference>
<dbReference type="GeneID" id="4984168"/>
<dbReference type="VEuPathDB" id="FungiDB:An09g06320"/>
<dbReference type="VEuPathDB" id="FungiDB:ASPNIDRAFT2_1115095"/>
<dbReference type="VEuPathDB" id="FungiDB:ATCC64974_8040"/>
<dbReference type="VEuPathDB" id="FungiDB:M747DRAFT_287874"/>
<dbReference type="eggNOG" id="KOG0780">
    <property type="taxonomic scope" value="Eukaryota"/>
</dbReference>
<dbReference type="GO" id="GO:0005829">
    <property type="term" value="C:cytosol"/>
    <property type="evidence" value="ECO:0007669"/>
    <property type="project" value="TreeGrafter"/>
</dbReference>
<dbReference type="GO" id="GO:0005783">
    <property type="term" value="C:endoplasmic reticulum"/>
    <property type="evidence" value="ECO:0007669"/>
    <property type="project" value="UniProtKB-SubCell"/>
</dbReference>
<dbReference type="GO" id="GO:0005786">
    <property type="term" value="C:signal recognition particle, endoplasmic reticulum targeting"/>
    <property type="evidence" value="ECO:0007669"/>
    <property type="project" value="UniProtKB-KW"/>
</dbReference>
<dbReference type="GO" id="GO:0008312">
    <property type="term" value="F:7S RNA binding"/>
    <property type="evidence" value="ECO:0007669"/>
    <property type="project" value="EnsemblFungi"/>
</dbReference>
<dbReference type="GO" id="GO:0016887">
    <property type="term" value="F:ATP hydrolysis activity"/>
    <property type="evidence" value="ECO:0007669"/>
    <property type="project" value="InterPro"/>
</dbReference>
<dbReference type="GO" id="GO:0030942">
    <property type="term" value="F:endoplasmic reticulum signal peptide binding"/>
    <property type="evidence" value="ECO:0007669"/>
    <property type="project" value="TreeGrafter"/>
</dbReference>
<dbReference type="GO" id="GO:0005525">
    <property type="term" value="F:GTP binding"/>
    <property type="evidence" value="ECO:0007669"/>
    <property type="project" value="UniProtKB-KW"/>
</dbReference>
<dbReference type="GO" id="GO:0003924">
    <property type="term" value="F:GTPase activity"/>
    <property type="evidence" value="ECO:0007669"/>
    <property type="project" value="EnsemblFungi"/>
</dbReference>
<dbReference type="GO" id="GO:0006616">
    <property type="term" value="P:SRP-dependent cotranslational protein targeting to membrane, translocation"/>
    <property type="evidence" value="ECO:0007669"/>
    <property type="project" value="TreeGrafter"/>
</dbReference>
<dbReference type="CDD" id="cd17875">
    <property type="entry name" value="SRP54_G"/>
    <property type="match status" value="1"/>
</dbReference>
<dbReference type="FunFam" id="1.10.260.30:FF:000003">
    <property type="entry name" value="Signal recognition particle 54 kDa protein"/>
    <property type="match status" value="1"/>
</dbReference>
<dbReference type="FunFam" id="3.40.50.300:FF:000022">
    <property type="entry name" value="Signal recognition particle 54 kDa subunit"/>
    <property type="match status" value="1"/>
</dbReference>
<dbReference type="FunFam" id="1.20.120.140:FF:000001">
    <property type="entry name" value="Signal recognition particle GTPase"/>
    <property type="match status" value="1"/>
</dbReference>
<dbReference type="Gene3D" id="3.40.50.300">
    <property type="entry name" value="P-loop containing nucleotide triphosphate hydrolases"/>
    <property type="match status" value="1"/>
</dbReference>
<dbReference type="Gene3D" id="1.20.120.140">
    <property type="entry name" value="Signal recognition particle SRP54, nucleotide-binding domain"/>
    <property type="match status" value="1"/>
</dbReference>
<dbReference type="Gene3D" id="1.10.260.30">
    <property type="entry name" value="Signal recognition particle, SRP54 subunit, M-domain"/>
    <property type="match status" value="1"/>
</dbReference>
<dbReference type="HAMAP" id="MF_00306">
    <property type="entry name" value="SRP54"/>
    <property type="match status" value="1"/>
</dbReference>
<dbReference type="InterPro" id="IPR003593">
    <property type="entry name" value="AAA+_ATPase"/>
</dbReference>
<dbReference type="InterPro" id="IPR027417">
    <property type="entry name" value="P-loop_NTPase"/>
</dbReference>
<dbReference type="InterPro" id="IPR036891">
    <property type="entry name" value="Signal_recog_part_SRP54_M_sf"/>
</dbReference>
<dbReference type="InterPro" id="IPR013822">
    <property type="entry name" value="Signal_recog_particl_SRP54_hlx"/>
</dbReference>
<dbReference type="InterPro" id="IPR004125">
    <property type="entry name" value="Signal_recog_particle_SRP54_M"/>
</dbReference>
<dbReference type="InterPro" id="IPR036225">
    <property type="entry name" value="SRP/SRP_N"/>
</dbReference>
<dbReference type="InterPro" id="IPR022941">
    <property type="entry name" value="SRP54"/>
</dbReference>
<dbReference type="InterPro" id="IPR006325">
    <property type="entry name" value="SRP54_euk"/>
</dbReference>
<dbReference type="InterPro" id="IPR000897">
    <property type="entry name" value="SRP54_GTPase_dom"/>
</dbReference>
<dbReference type="InterPro" id="IPR042101">
    <property type="entry name" value="SRP54_N_sf"/>
</dbReference>
<dbReference type="NCBIfam" id="TIGR01425">
    <property type="entry name" value="SRP54_euk"/>
    <property type="match status" value="1"/>
</dbReference>
<dbReference type="PANTHER" id="PTHR11564">
    <property type="entry name" value="SIGNAL RECOGNITION PARTICLE 54K PROTEIN SRP54"/>
    <property type="match status" value="1"/>
</dbReference>
<dbReference type="PANTHER" id="PTHR11564:SF5">
    <property type="entry name" value="SIGNAL RECOGNITION PARTICLE SUBUNIT SRP54"/>
    <property type="match status" value="1"/>
</dbReference>
<dbReference type="Pfam" id="PF00448">
    <property type="entry name" value="SRP54"/>
    <property type="match status" value="1"/>
</dbReference>
<dbReference type="Pfam" id="PF02881">
    <property type="entry name" value="SRP54_N"/>
    <property type="match status" value="1"/>
</dbReference>
<dbReference type="Pfam" id="PF02978">
    <property type="entry name" value="SRP_SPB"/>
    <property type="match status" value="1"/>
</dbReference>
<dbReference type="SMART" id="SM00382">
    <property type="entry name" value="AAA"/>
    <property type="match status" value="1"/>
</dbReference>
<dbReference type="SMART" id="SM00962">
    <property type="entry name" value="SRP54"/>
    <property type="match status" value="1"/>
</dbReference>
<dbReference type="SMART" id="SM00963">
    <property type="entry name" value="SRP54_N"/>
    <property type="match status" value="1"/>
</dbReference>
<dbReference type="SUPFAM" id="SSF47364">
    <property type="entry name" value="Domain of the SRP/SRP receptor G-proteins"/>
    <property type="match status" value="1"/>
</dbReference>
<dbReference type="SUPFAM" id="SSF52540">
    <property type="entry name" value="P-loop containing nucleoside triphosphate hydrolases"/>
    <property type="match status" value="1"/>
</dbReference>
<dbReference type="SUPFAM" id="SSF47446">
    <property type="entry name" value="Signal peptide-binding domain"/>
    <property type="match status" value="1"/>
</dbReference>
<dbReference type="PROSITE" id="PS00300">
    <property type="entry name" value="SRP54"/>
    <property type="match status" value="1"/>
</dbReference>
<reference key="1">
    <citation type="journal article" date="1995" name="Gene">
        <title>Nucleotide sequence of the Aspergillus niger srpA gene.</title>
        <authorList>
            <person name="Thompson S.A."/>
            <person name="Golightly E.J."/>
            <person name="Yaver D.S."/>
        </authorList>
    </citation>
    <scope>NUCLEOTIDE SEQUENCE [GENOMIC DNA]</scope>
</reference>
<protein>
    <recommendedName>
        <fullName>Signal recognition particle subunit SRP54</fullName>
        <ecNumber evidence="3">3.6.5.4</ecNumber>
    </recommendedName>
    <alternativeName>
        <fullName>Signal recognition particle 54 kDa protein homolog</fullName>
    </alternativeName>
</protein>
<feature type="chain" id="PRO_0000101199" description="Signal recognition particle subunit SRP54">
    <location>
        <begin position="1"/>
        <end position="534"/>
    </location>
</feature>
<feature type="region of interest" description="G-domain">
    <location>
        <begin position="1"/>
        <end position="296"/>
    </location>
</feature>
<feature type="region of interest" description="M-domain">
    <location>
        <begin position="297"/>
        <end position="534"/>
    </location>
</feature>
<feature type="binding site" evidence="1">
    <location>
        <begin position="109"/>
        <end position="116"/>
    </location>
    <ligand>
        <name>GTP</name>
        <dbReference type="ChEBI" id="CHEBI:37565"/>
    </ligand>
</feature>
<feature type="binding site" evidence="1">
    <location>
        <begin position="191"/>
        <end position="195"/>
    </location>
    <ligand>
        <name>GTP</name>
        <dbReference type="ChEBI" id="CHEBI:37565"/>
    </ligand>
</feature>
<feature type="binding site" evidence="1">
    <location>
        <begin position="249"/>
        <end position="252"/>
    </location>
    <ligand>
        <name>GTP</name>
        <dbReference type="ChEBI" id="CHEBI:37565"/>
    </ligand>
</feature>
<accession>Q00179</accession>
<name>SRP54_ASPNG</name>
<gene>
    <name type="primary">srpA</name>
</gene>
<sequence>MVLQDLGRRINAAVNDLTRSNNLDEKQAFDDMIKEICAALLSADVNVRLVQSLRKSIKSSVNFASLPPAVNKKRLIQKAVFDELVSLVDPHAEPFRPKKGRSNVIMFVGLQGAGKTTTCTKLARHYQMRGFKTALVCADTFRAGAFDQLKQNATKAKIPYYGSLTQTDPAIVAAEGVAKFKKERFEIIIVDTSGRHKQEEELFTEMTQIQTAVTPDQTILVLDSTIGQAAEAQSSAFKATADFGAIIITKTDGHAAGGGAISAVAATHTPIIYLGTGEHLMDLERFEPKAFIQKLLGMGDMAGLVEHVQAVTKDSASAKETYKHISEGIYTLRDFRENITSIMKMGPLSKLSGMIPGLSNLTAGLDDEDGSMKLRRMIYIFDSMTAAELDGDGKMFVEQPSRMVRIACGSGTTVREVEDLLSQHRMMAGMAKRVGGQKKQMQRAQNMLKGGNKEQQLAAMQKRMAAMGGAGGGGFPGMPGMGDMAKMMQMLQGQGGGGGGGLPGLGGMDLQSMMSQMSGLMGGGGGGGGRGRGR</sequence>
<keyword id="KW-0963">Cytoplasm</keyword>
<keyword id="KW-0256">Endoplasmic reticulum</keyword>
<keyword id="KW-0342">GTP-binding</keyword>
<keyword id="KW-0378">Hydrolase</keyword>
<keyword id="KW-0547">Nucleotide-binding</keyword>
<keyword id="KW-0687">Ribonucleoprotein</keyword>
<keyword id="KW-0694">RNA-binding</keyword>
<keyword id="KW-0733">Signal recognition particle</keyword>
<comment type="function">
    <text evidence="2">Signal-recognition-particle (SRP) assembly has a crucial role in targeting secretory proteins to the rough endoplasmic reticulum (ER) membrane. SRP is required for the cotranslational protein translocation for ER import and preferentially recognizes strongly hydrophobic signal sequences. It is involved in targeting the nascent chain-ribosome (RNC) complex to the ER and is proposed to participate in the arrest of nascent chain elongation during membrane targeting. srpA/srp54 binds to the signal sequence of presecretory protein when they emerge from the ribosomes. srpA/srp54 interacts with the scR1 RNA and mediates the association of the resulting SRP-RNC complex with the signal recognition particle receptor (SR) via its alpha subunit srp101. Both, srpA/srp54 and srp101, are locked in their GTP bound forms in the SRP-RNC-SR complex, which dissociates upon transferring the signal sequence to the protein-conducting channel (translocon). After signal sequence transfer, srpA/srp54 and srp101 act as reciprocal GTPase-activating proteins (GAPs), thereby resolving their association.</text>
</comment>
<comment type="catalytic activity">
    <reaction evidence="3">
        <text>GTP + H2O = GDP + phosphate + H(+)</text>
        <dbReference type="Rhea" id="RHEA:19669"/>
        <dbReference type="ChEBI" id="CHEBI:15377"/>
        <dbReference type="ChEBI" id="CHEBI:15378"/>
        <dbReference type="ChEBI" id="CHEBI:37565"/>
        <dbReference type="ChEBI" id="CHEBI:43474"/>
        <dbReference type="ChEBI" id="CHEBI:58189"/>
        <dbReference type="EC" id="3.6.5.4"/>
    </reaction>
    <physiologicalReaction direction="left-to-right" evidence="3">
        <dbReference type="Rhea" id="RHEA:19670"/>
    </physiologicalReaction>
</comment>
<comment type="subunit">
    <text evidence="2">Fungal signal recognition particle consists of a 7S RNA molecule (scR1) and at least six protein subunits: srp72, srp68, srpA/srp54, sec65, srp21 and srp14.</text>
</comment>
<comment type="subcellular location">
    <subcellularLocation>
        <location evidence="2">Cytoplasm</location>
    </subcellularLocation>
    <subcellularLocation>
        <location evidence="2">Endoplasmic reticulum</location>
    </subcellularLocation>
</comment>
<comment type="domain">
    <text evidence="3">The NG domain, also named G domain, is a special guanosine triphosphatase (GTPase) domain, which binds GTP and forms a guanosine 5'-triphosphate (GTP)-dependent complex with a homologous NG domain in the SRP receptor subunit srp101. The two NG domains undergo cooperative rearrangements upon their assembly, which culminate in the reciprocal activation of the GTPase activity of one another. SRP receptor compaction upon binding with cargo-loaded SRP and GTPase rearrangement drive SRP-mediated cotranslational protein translocation into the ER.</text>
</comment>
<comment type="domain">
    <text evidence="3">The M domain binds the 7SL RNA and the signal sequence of presecretory proteins.</text>
</comment>
<comment type="similarity">
    <text evidence="4">Belongs to the GTP-binding SRP family. SRP54 subfamily.</text>
</comment>